<gene>
    <name evidence="2" type="primary">rnj1</name>
    <name type="ordered locus">SAV1089</name>
</gene>
<keyword id="KW-0963">Cytoplasm</keyword>
<keyword id="KW-0255">Endonuclease</keyword>
<keyword id="KW-0269">Exonuclease</keyword>
<keyword id="KW-0378">Hydrolase</keyword>
<keyword id="KW-0479">Metal-binding</keyword>
<keyword id="KW-0540">Nuclease</keyword>
<keyword id="KW-0694">RNA-binding</keyword>
<keyword id="KW-0698">rRNA processing</keyword>
<keyword id="KW-0862">Zinc</keyword>
<feature type="chain" id="PRO_0000286842" description="Ribonuclease J 1">
    <location>
        <begin position="1"/>
        <end position="565"/>
    </location>
</feature>
<feature type="binding site" evidence="2">
    <location>
        <position position="74"/>
    </location>
    <ligand>
        <name>Zn(2+)</name>
        <dbReference type="ChEBI" id="CHEBI:29105"/>
        <label>1</label>
        <note>catalytic</note>
    </ligand>
</feature>
<feature type="binding site" evidence="2">
    <location>
        <position position="76"/>
    </location>
    <ligand>
        <name>Zn(2+)</name>
        <dbReference type="ChEBI" id="CHEBI:29105"/>
        <label>1</label>
        <note>catalytic</note>
    </ligand>
</feature>
<feature type="binding site" evidence="2">
    <location>
        <position position="78"/>
    </location>
    <ligand>
        <name>Zn(2+)</name>
        <dbReference type="ChEBI" id="CHEBI:29105"/>
        <label>2</label>
        <note>catalytic</note>
    </ligand>
</feature>
<feature type="binding site" evidence="2">
    <location>
        <position position="79"/>
    </location>
    <ligand>
        <name>Zn(2+)</name>
        <dbReference type="ChEBI" id="CHEBI:29105"/>
        <label>2</label>
        <note>catalytic</note>
    </ligand>
</feature>
<feature type="binding site" evidence="2">
    <location>
        <position position="142"/>
    </location>
    <ligand>
        <name>Zn(2+)</name>
        <dbReference type="ChEBI" id="CHEBI:29105"/>
        <label>1</label>
        <note>catalytic</note>
    </ligand>
</feature>
<feature type="binding site" evidence="2">
    <location>
        <position position="164"/>
    </location>
    <ligand>
        <name>Zn(2+)</name>
        <dbReference type="ChEBI" id="CHEBI:29105"/>
        <label>1</label>
        <note>catalytic</note>
    </ligand>
</feature>
<feature type="binding site" evidence="2">
    <location>
        <position position="164"/>
    </location>
    <ligand>
        <name>Zn(2+)</name>
        <dbReference type="ChEBI" id="CHEBI:29105"/>
        <label>2</label>
        <note>catalytic</note>
    </ligand>
</feature>
<feature type="binding site" evidence="2">
    <location>
        <begin position="364"/>
        <end position="368"/>
    </location>
    <ligand>
        <name>substrate</name>
    </ligand>
</feature>
<feature type="binding site" evidence="2">
    <location>
        <position position="390"/>
    </location>
    <ligand>
        <name>Zn(2+)</name>
        <dbReference type="ChEBI" id="CHEBI:29105"/>
        <label>2</label>
        <note>catalytic</note>
    </ligand>
</feature>
<accession>Q99V09</accession>
<proteinExistence type="inferred from homology"/>
<comment type="function">
    <text evidence="1">An RNase that has 5'-3' exonuclease and possibly endoonuclease activity. Involved in maturation of rRNA and in some organisms also mRNA maturation and/or decay (By similarity).</text>
</comment>
<comment type="cofactor">
    <cofactor evidence="2">
        <name>Zn(2+)</name>
        <dbReference type="ChEBI" id="CHEBI:29105"/>
    </cofactor>
    <text evidence="2">Binds up to 2 Zn(2+) ions per subunit. It is not clear if Zn(2+) or Mg(2+) is physiologically important.</text>
</comment>
<comment type="subunit">
    <text evidence="2">Homodimer, may be a subunit of the RNA degradosome.</text>
</comment>
<comment type="subcellular location">
    <subcellularLocation>
        <location evidence="2">Cytoplasm</location>
    </subcellularLocation>
</comment>
<comment type="similarity">
    <text evidence="2">Belongs to the metallo-beta-lactamase superfamily. RNA-metabolizing metallo-beta-lactamase-like family. Bacterial RNase J subfamily.</text>
</comment>
<organism>
    <name type="scientific">Staphylococcus aureus (strain Mu50 / ATCC 700699)</name>
    <dbReference type="NCBI Taxonomy" id="158878"/>
    <lineage>
        <taxon>Bacteria</taxon>
        <taxon>Bacillati</taxon>
        <taxon>Bacillota</taxon>
        <taxon>Bacilli</taxon>
        <taxon>Bacillales</taxon>
        <taxon>Staphylococcaceae</taxon>
        <taxon>Staphylococcus</taxon>
    </lineage>
</organism>
<name>RNJ1_STAAM</name>
<evidence type="ECO:0000250" key="1"/>
<evidence type="ECO:0000255" key="2">
    <source>
        <dbReference type="HAMAP-Rule" id="MF_01491"/>
    </source>
</evidence>
<reference key="1">
    <citation type="journal article" date="2001" name="Lancet">
        <title>Whole genome sequencing of meticillin-resistant Staphylococcus aureus.</title>
        <authorList>
            <person name="Kuroda M."/>
            <person name="Ohta T."/>
            <person name="Uchiyama I."/>
            <person name="Baba T."/>
            <person name="Yuzawa H."/>
            <person name="Kobayashi I."/>
            <person name="Cui L."/>
            <person name="Oguchi A."/>
            <person name="Aoki K."/>
            <person name="Nagai Y."/>
            <person name="Lian J.-Q."/>
            <person name="Ito T."/>
            <person name="Kanamori M."/>
            <person name="Matsumaru H."/>
            <person name="Maruyama A."/>
            <person name="Murakami H."/>
            <person name="Hosoyama A."/>
            <person name="Mizutani-Ui Y."/>
            <person name="Takahashi N.K."/>
            <person name="Sawano T."/>
            <person name="Inoue R."/>
            <person name="Kaito C."/>
            <person name="Sekimizu K."/>
            <person name="Hirakawa H."/>
            <person name="Kuhara S."/>
            <person name="Goto S."/>
            <person name="Yabuzaki J."/>
            <person name="Kanehisa M."/>
            <person name="Yamashita A."/>
            <person name="Oshima K."/>
            <person name="Furuya K."/>
            <person name="Yoshino C."/>
            <person name="Shiba T."/>
            <person name="Hattori M."/>
            <person name="Ogasawara N."/>
            <person name="Hayashi H."/>
            <person name="Hiramatsu K."/>
        </authorList>
    </citation>
    <scope>NUCLEOTIDE SEQUENCE [LARGE SCALE GENOMIC DNA]</scope>
    <source>
        <strain>Mu50 / ATCC 700699</strain>
    </source>
</reference>
<dbReference type="EC" id="3.1.-.-" evidence="2"/>
<dbReference type="EMBL" id="BA000017">
    <property type="protein sequence ID" value="BAB57251.1"/>
    <property type="molecule type" value="Genomic_DNA"/>
</dbReference>
<dbReference type="SMR" id="Q99V09"/>
<dbReference type="KEGG" id="sav:SAV1089"/>
<dbReference type="HOGENOM" id="CLU_008727_3_1_9"/>
<dbReference type="PhylomeDB" id="Q99V09"/>
<dbReference type="Proteomes" id="UP000002481">
    <property type="component" value="Chromosome"/>
</dbReference>
<dbReference type="GO" id="GO:0005737">
    <property type="term" value="C:cytoplasm"/>
    <property type="evidence" value="ECO:0007669"/>
    <property type="project" value="UniProtKB-SubCell"/>
</dbReference>
<dbReference type="GO" id="GO:0004534">
    <property type="term" value="F:5'-3' RNA exonuclease activity"/>
    <property type="evidence" value="ECO:0007669"/>
    <property type="project" value="UniProtKB-UniRule"/>
</dbReference>
<dbReference type="GO" id="GO:0003723">
    <property type="term" value="F:RNA binding"/>
    <property type="evidence" value="ECO:0007669"/>
    <property type="project" value="UniProtKB-UniRule"/>
</dbReference>
<dbReference type="GO" id="GO:0004521">
    <property type="term" value="F:RNA endonuclease activity"/>
    <property type="evidence" value="ECO:0007669"/>
    <property type="project" value="UniProtKB-UniRule"/>
</dbReference>
<dbReference type="GO" id="GO:0008270">
    <property type="term" value="F:zinc ion binding"/>
    <property type="evidence" value="ECO:0007669"/>
    <property type="project" value="InterPro"/>
</dbReference>
<dbReference type="GO" id="GO:0006364">
    <property type="term" value="P:rRNA processing"/>
    <property type="evidence" value="ECO:0007669"/>
    <property type="project" value="UniProtKB-UniRule"/>
</dbReference>
<dbReference type="CDD" id="cd07714">
    <property type="entry name" value="RNaseJ_MBL-fold"/>
    <property type="match status" value="1"/>
</dbReference>
<dbReference type="FunFam" id="3.10.20.580:FF:000001">
    <property type="entry name" value="Ribonuclease J"/>
    <property type="match status" value="1"/>
</dbReference>
<dbReference type="Gene3D" id="3.10.20.580">
    <property type="match status" value="1"/>
</dbReference>
<dbReference type="Gene3D" id="3.40.50.10710">
    <property type="entry name" value="Metallo-hydrolase/oxidoreductase"/>
    <property type="match status" value="1"/>
</dbReference>
<dbReference type="Gene3D" id="3.60.15.10">
    <property type="entry name" value="Ribonuclease Z/Hydroxyacylglutathione hydrolase-like"/>
    <property type="match status" value="1"/>
</dbReference>
<dbReference type="HAMAP" id="MF_01491">
    <property type="entry name" value="RNase_J_bact"/>
    <property type="match status" value="1"/>
</dbReference>
<dbReference type="InterPro" id="IPR001279">
    <property type="entry name" value="Metallo-B-lactamas"/>
</dbReference>
<dbReference type="InterPro" id="IPR036866">
    <property type="entry name" value="RibonucZ/Hydroxyglut_hydro"/>
</dbReference>
<dbReference type="InterPro" id="IPR011108">
    <property type="entry name" value="RMMBL"/>
</dbReference>
<dbReference type="InterPro" id="IPR004613">
    <property type="entry name" value="RNase_J"/>
</dbReference>
<dbReference type="InterPro" id="IPR042173">
    <property type="entry name" value="RNase_J_2"/>
</dbReference>
<dbReference type="InterPro" id="IPR055132">
    <property type="entry name" value="RNase_J_b_CASP"/>
</dbReference>
<dbReference type="InterPro" id="IPR030854">
    <property type="entry name" value="RNase_J_bac"/>
</dbReference>
<dbReference type="InterPro" id="IPR041636">
    <property type="entry name" value="RNase_J_C"/>
</dbReference>
<dbReference type="InterPro" id="IPR001587">
    <property type="entry name" value="RNase_J_CS"/>
</dbReference>
<dbReference type="NCBIfam" id="TIGR00649">
    <property type="entry name" value="MG423"/>
    <property type="match status" value="1"/>
</dbReference>
<dbReference type="NCBIfam" id="NF047419">
    <property type="entry name" value="RNase_J1_RnjA"/>
    <property type="match status" value="1"/>
</dbReference>
<dbReference type="PANTHER" id="PTHR43694">
    <property type="entry name" value="RIBONUCLEASE J"/>
    <property type="match status" value="1"/>
</dbReference>
<dbReference type="PANTHER" id="PTHR43694:SF1">
    <property type="entry name" value="RIBONUCLEASE J"/>
    <property type="match status" value="1"/>
</dbReference>
<dbReference type="Pfam" id="PF00753">
    <property type="entry name" value="Lactamase_B"/>
    <property type="match status" value="1"/>
</dbReference>
<dbReference type="Pfam" id="PF07521">
    <property type="entry name" value="RMMBL"/>
    <property type="match status" value="1"/>
</dbReference>
<dbReference type="Pfam" id="PF22505">
    <property type="entry name" value="RNase_J_b_CASP"/>
    <property type="match status" value="1"/>
</dbReference>
<dbReference type="Pfam" id="PF17770">
    <property type="entry name" value="RNase_J_C"/>
    <property type="match status" value="1"/>
</dbReference>
<dbReference type="PIRSF" id="PIRSF004803">
    <property type="entry name" value="RnjA"/>
    <property type="match status" value="1"/>
</dbReference>
<dbReference type="SMART" id="SM00849">
    <property type="entry name" value="Lactamase_B"/>
    <property type="match status" value="1"/>
</dbReference>
<dbReference type="SUPFAM" id="SSF56281">
    <property type="entry name" value="Metallo-hydrolase/oxidoreductase"/>
    <property type="match status" value="1"/>
</dbReference>
<dbReference type="PROSITE" id="PS01292">
    <property type="entry name" value="UPF0036"/>
    <property type="match status" value="1"/>
</dbReference>
<protein>
    <recommendedName>
        <fullName evidence="2">Ribonuclease J 1</fullName>
        <shortName evidence="2">RNase J1</shortName>
        <ecNumber evidence="2">3.1.-.-</ecNumber>
    </recommendedName>
</protein>
<sequence>MKQLHPNEVGVYALGGLGEIGKNTYAVEYKDEIVIIDAGIKFPDDNLLGIDYVIPDYTYLVQNQDKIVGLFITHGHEDHIGGVPFLLKQLNIPIYGGPLALGLIRNKLEEHHLLRTAKLNEINEDSVIKSKHFTISFYLTTHSIPETYGVIVDTPEGKVVHTGDFKFDFTPVGKPANIAKMAQLGEEGVLCLLSDSTNSLVPDFTLSEREVGQNVDKIFRNCKGRIIFATFASNIYRVQQAVEAAIKNNRKIVTFGRSMENNIKIGMELGYIKAPPETFIEPNKINTVPKHELLILCTGSQGEPMAALSRIANGTHKQIKIIPEDTVVFSSSPIPGNTKSINRTINSLYKAGADVIHSKISNIHTSGHGSQGDQQLMLRLIKPKYFLPIHGEYRMLKAHGETGVECGVEEDNVFIFDIGDVLALTHDSARKAGRIPSGNVLVDGSGIGDIGNVVIRDRKLLSEEGLVIVVVSIDFNTNKLLSGPDIISRGFVYMRESGQLIYDAQRKIKTDVISKLNQNKDIQWHQIKSSIIETLQPYLFEKTARKPMILPVIMKVNEQKESNNK</sequence>